<evidence type="ECO:0000255" key="1">
    <source>
        <dbReference type="HAMAP-Rule" id="MF_00206"/>
    </source>
</evidence>
<evidence type="ECO:0000255" key="2">
    <source>
        <dbReference type="PROSITE-ProRule" id="PRU01266"/>
    </source>
</evidence>
<dbReference type="EC" id="2.8.1.8" evidence="1"/>
<dbReference type="EMBL" id="CP000825">
    <property type="protein sequence ID" value="ABV51395.1"/>
    <property type="molecule type" value="Genomic_DNA"/>
</dbReference>
<dbReference type="SMR" id="A8G714"/>
<dbReference type="STRING" id="93060.P9215_17821"/>
<dbReference type="KEGG" id="pmh:P9215_17821"/>
<dbReference type="eggNOG" id="COG0320">
    <property type="taxonomic scope" value="Bacteria"/>
</dbReference>
<dbReference type="HOGENOM" id="CLU_033144_2_1_3"/>
<dbReference type="UniPathway" id="UPA00538">
    <property type="reaction ID" value="UER00593"/>
</dbReference>
<dbReference type="Proteomes" id="UP000002014">
    <property type="component" value="Chromosome"/>
</dbReference>
<dbReference type="GO" id="GO:0005737">
    <property type="term" value="C:cytoplasm"/>
    <property type="evidence" value="ECO:0007669"/>
    <property type="project" value="UniProtKB-SubCell"/>
</dbReference>
<dbReference type="GO" id="GO:0051539">
    <property type="term" value="F:4 iron, 4 sulfur cluster binding"/>
    <property type="evidence" value="ECO:0007669"/>
    <property type="project" value="UniProtKB-UniRule"/>
</dbReference>
<dbReference type="GO" id="GO:0016992">
    <property type="term" value="F:lipoate synthase activity"/>
    <property type="evidence" value="ECO:0007669"/>
    <property type="project" value="UniProtKB-UniRule"/>
</dbReference>
<dbReference type="GO" id="GO:0046872">
    <property type="term" value="F:metal ion binding"/>
    <property type="evidence" value="ECO:0007669"/>
    <property type="project" value="UniProtKB-KW"/>
</dbReference>
<dbReference type="CDD" id="cd01335">
    <property type="entry name" value="Radical_SAM"/>
    <property type="match status" value="1"/>
</dbReference>
<dbReference type="FunFam" id="3.20.20.70:FF:000040">
    <property type="entry name" value="Lipoyl synthase"/>
    <property type="match status" value="1"/>
</dbReference>
<dbReference type="Gene3D" id="3.20.20.70">
    <property type="entry name" value="Aldolase class I"/>
    <property type="match status" value="1"/>
</dbReference>
<dbReference type="HAMAP" id="MF_00206">
    <property type="entry name" value="Lipoyl_synth"/>
    <property type="match status" value="1"/>
</dbReference>
<dbReference type="InterPro" id="IPR013785">
    <property type="entry name" value="Aldolase_TIM"/>
</dbReference>
<dbReference type="InterPro" id="IPR006638">
    <property type="entry name" value="Elp3/MiaA/NifB-like_rSAM"/>
</dbReference>
<dbReference type="InterPro" id="IPR003698">
    <property type="entry name" value="Lipoyl_synth"/>
</dbReference>
<dbReference type="InterPro" id="IPR007197">
    <property type="entry name" value="rSAM"/>
</dbReference>
<dbReference type="NCBIfam" id="TIGR00510">
    <property type="entry name" value="lipA"/>
    <property type="match status" value="1"/>
</dbReference>
<dbReference type="NCBIfam" id="NF004019">
    <property type="entry name" value="PRK05481.1"/>
    <property type="match status" value="1"/>
</dbReference>
<dbReference type="NCBIfam" id="NF009544">
    <property type="entry name" value="PRK12928.1"/>
    <property type="match status" value="1"/>
</dbReference>
<dbReference type="PANTHER" id="PTHR10949">
    <property type="entry name" value="LIPOYL SYNTHASE"/>
    <property type="match status" value="1"/>
</dbReference>
<dbReference type="PANTHER" id="PTHR10949:SF0">
    <property type="entry name" value="LIPOYL SYNTHASE, MITOCHONDRIAL"/>
    <property type="match status" value="1"/>
</dbReference>
<dbReference type="Pfam" id="PF04055">
    <property type="entry name" value="Radical_SAM"/>
    <property type="match status" value="1"/>
</dbReference>
<dbReference type="PIRSF" id="PIRSF005963">
    <property type="entry name" value="Lipoyl_synth"/>
    <property type="match status" value="1"/>
</dbReference>
<dbReference type="SFLD" id="SFLDF00271">
    <property type="entry name" value="lipoyl_synthase"/>
    <property type="match status" value="1"/>
</dbReference>
<dbReference type="SFLD" id="SFLDG01058">
    <property type="entry name" value="lipoyl_synthase_like"/>
    <property type="match status" value="1"/>
</dbReference>
<dbReference type="SMART" id="SM00729">
    <property type="entry name" value="Elp3"/>
    <property type="match status" value="1"/>
</dbReference>
<dbReference type="SUPFAM" id="SSF102114">
    <property type="entry name" value="Radical SAM enzymes"/>
    <property type="match status" value="1"/>
</dbReference>
<dbReference type="PROSITE" id="PS51918">
    <property type="entry name" value="RADICAL_SAM"/>
    <property type="match status" value="1"/>
</dbReference>
<name>LIPA_PROM2</name>
<comment type="function">
    <text evidence="1">Catalyzes the radical-mediated insertion of two sulfur atoms into the C-6 and C-8 positions of the octanoyl moiety bound to the lipoyl domains of lipoate-dependent enzymes, thereby converting the octanoylated domains into lipoylated derivatives.</text>
</comment>
<comment type="catalytic activity">
    <reaction evidence="1">
        <text>[[Fe-S] cluster scaffold protein carrying a second [4Fe-4S](2+) cluster] + N(6)-octanoyl-L-lysyl-[protein] + 2 oxidized [2Fe-2S]-[ferredoxin] + 2 S-adenosyl-L-methionine + 4 H(+) = [[Fe-S] cluster scaffold protein] + N(6)-[(R)-dihydrolipoyl]-L-lysyl-[protein] + 4 Fe(3+) + 2 hydrogen sulfide + 2 5'-deoxyadenosine + 2 L-methionine + 2 reduced [2Fe-2S]-[ferredoxin]</text>
        <dbReference type="Rhea" id="RHEA:16585"/>
        <dbReference type="Rhea" id="RHEA-COMP:9928"/>
        <dbReference type="Rhea" id="RHEA-COMP:10000"/>
        <dbReference type="Rhea" id="RHEA-COMP:10001"/>
        <dbReference type="Rhea" id="RHEA-COMP:10475"/>
        <dbReference type="Rhea" id="RHEA-COMP:14568"/>
        <dbReference type="Rhea" id="RHEA-COMP:14569"/>
        <dbReference type="ChEBI" id="CHEBI:15378"/>
        <dbReference type="ChEBI" id="CHEBI:17319"/>
        <dbReference type="ChEBI" id="CHEBI:29034"/>
        <dbReference type="ChEBI" id="CHEBI:29919"/>
        <dbReference type="ChEBI" id="CHEBI:33722"/>
        <dbReference type="ChEBI" id="CHEBI:33737"/>
        <dbReference type="ChEBI" id="CHEBI:33738"/>
        <dbReference type="ChEBI" id="CHEBI:57844"/>
        <dbReference type="ChEBI" id="CHEBI:59789"/>
        <dbReference type="ChEBI" id="CHEBI:78809"/>
        <dbReference type="ChEBI" id="CHEBI:83100"/>
        <dbReference type="EC" id="2.8.1.8"/>
    </reaction>
</comment>
<comment type="cofactor">
    <cofactor evidence="1">
        <name>[4Fe-4S] cluster</name>
        <dbReference type="ChEBI" id="CHEBI:49883"/>
    </cofactor>
    <text evidence="1">Binds 2 [4Fe-4S] clusters per subunit. One cluster is coordinated with 3 cysteines and an exchangeable S-adenosyl-L-methionine.</text>
</comment>
<comment type="pathway">
    <text evidence="1">Protein modification; protein lipoylation via endogenous pathway; protein N(6)-(lipoyl)lysine from octanoyl-[acyl-carrier-protein]: step 2/2.</text>
</comment>
<comment type="subcellular location">
    <subcellularLocation>
        <location evidence="1">Cytoplasm</location>
    </subcellularLocation>
</comment>
<comment type="similarity">
    <text evidence="1">Belongs to the radical SAM superfamily. Lipoyl synthase family.</text>
</comment>
<proteinExistence type="inferred from homology"/>
<protein>
    <recommendedName>
        <fullName evidence="1">Lipoyl synthase</fullName>
        <ecNumber evidence="1">2.8.1.8</ecNumber>
    </recommendedName>
    <alternativeName>
        <fullName evidence="1">Lip-syn</fullName>
        <shortName evidence="1">LS</shortName>
    </alternativeName>
    <alternativeName>
        <fullName evidence="1">Lipoate synthase</fullName>
    </alternativeName>
    <alternativeName>
        <fullName evidence="1">Lipoic acid synthase</fullName>
    </alternativeName>
    <alternativeName>
        <fullName evidence="1">Sulfur insertion protein LipA</fullName>
    </alternativeName>
</protein>
<organism>
    <name type="scientific">Prochlorococcus marinus (strain MIT 9215)</name>
    <dbReference type="NCBI Taxonomy" id="93060"/>
    <lineage>
        <taxon>Bacteria</taxon>
        <taxon>Bacillati</taxon>
        <taxon>Cyanobacteriota</taxon>
        <taxon>Cyanophyceae</taxon>
        <taxon>Synechococcales</taxon>
        <taxon>Prochlorococcaceae</taxon>
        <taxon>Prochlorococcus</taxon>
    </lineage>
</organism>
<gene>
    <name evidence="1" type="primary">lipA</name>
    <name type="ordered locus">P9215_17821</name>
</gene>
<feature type="chain" id="PRO_1000058577" description="Lipoyl synthase">
    <location>
        <begin position="1"/>
        <end position="310"/>
    </location>
</feature>
<feature type="domain" description="Radical SAM core" evidence="2">
    <location>
        <begin position="66"/>
        <end position="284"/>
    </location>
</feature>
<feature type="binding site" evidence="1">
    <location>
        <position position="54"/>
    </location>
    <ligand>
        <name>[4Fe-4S] cluster</name>
        <dbReference type="ChEBI" id="CHEBI:49883"/>
        <label>1</label>
    </ligand>
</feature>
<feature type="binding site" evidence="1">
    <location>
        <position position="59"/>
    </location>
    <ligand>
        <name>[4Fe-4S] cluster</name>
        <dbReference type="ChEBI" id="CHEBI:49883"/>
        <label>1</label>
    </ligand>
</feature>
<feature type="binding site" evidence="1">
    <location>
        <position position="65"/>
    </location>
    <ligand>
        <name>[4Fe-4S] cluster</name>
        <dbReference type="ChEBI" id="CHEBI:49883"/>
        <label>1</label>
    </ligand>
</feature>
<feature type="binding site" evidence="1">
    <location>
        <position position="80"/>
    </location>
    <ligand>
        <name>[4Fe-4S] cluster</name>
        <dbReference type="ChEBI" id="CHEBI:49883"/>
        <label>2</label>
        <note>4Fe-4S-S-AdoMet</note>
    </ligand>
</feature>
<feature type="binding site" evidence="1">
    <location>
        <position position="84"/>
    </location>
    <ligand>
        <name>[4Fe-4S] cluster</name>
        <dbReference type="ChEBI" id="CHEBI:49883"/>
        <label>2</label>
        <note>4Fe-4S-S-AdoMet</note>
    </ligand>
</feature>
<feature type="binding site" evidence="1">
    <location>
        <position position="87"/>
    </location>
    <ligand>
        <name>[4Fe-4S] cluster</name>
        <dbReference type="ChEBI" id="CHEBI:49883"/>
        <label>2</label>
        <note>4Fe-4S-S-AdoMet</note>
    </ligand>
</feature>
<feature type="binding site" evidence="1">
    <location>
        <position position="295"/>
    </location>
    <ligand>
        <name>[4Fe-4S] cluster</name>
        <dbReference type="ChEBI" id="CHEBI:49883"/>
        <label>1</label>
    </ligand>
</feature>
<sequence>MIKIYLDEADQSHLTSISKNAATKPEWLRVKAPQFERIGNTASLLSDLKLNTVCQEASCPNIGECFASGTATFLIMGPACTRACPYCDINFDRSKRDLDPTEPHRLAEAVSRMNLKHVVITSVNRDDLDDGGASQFFQCVSEVRKKSPETTIELLIPDLCGNWQALELVLDSKPNVLNHNIETVKSLYRKVRPQGNYQRTLDLLKRTKEYFPSVYTKSGFMLGLGESDDEVLNLLSDLKNHFVDIVTIGQYLSPGPKHLPVQRFVSPPKFTYFKLFGEDNLGFMQVVSSPLTRSSYHAEEIQKLMKKYPR</sequence>
<reference key="1">
    <citation type="journal article" date="2007" name="PLoS Genet.">
        <title>Patterns and implications of gene gain and loss in the evolution of Prochlorococcus.</title>
        <authorList>
            <person name="Kettler G.C."/>
            <person name="Martiny A.C."/>
            <person name="Huang K."/>
            <person name="Zucker J."/>
            <person name="Coleman M.L."/>
            <person name="Rodrigue S."/>
            <person name="Chen F."/>
            <person name="Lapidus A."/>
            <person name="Ferriera S."/>
            <person name="Johnson J."/>
            <person name="Steglich C."/>
            <person name="Church G.M."/>
            <person name="Richardson P."/>
            <person name="Chisholm S.W."/>
        </authorList>
    </citation>
    <scope>NUCLEOTIDE SEQUENCE [LARGE SCALE GENOMIC DNA]</scope>
    <source>
        <strain>MIT 9215</strain>
    </source>
</reference>
<keyword id="KW-0004">4Fe-4S</keyword>
<keyword id="KW-0963">Cytoplasm</keyword>
<keyword id="KW-0408">Iron</keyword>
<keyword id="KW-0411">Iron-sulfur</keyword>
<keyword id="KW-0479">Metal-binding</keyword>
<keyword id="KW-0949">S-adenosyl-L-methionine</keyword>
<keyword id="KW-0808">Transferase</keyword>
<accession>A8G714</accession>